<reference key="1">
    <citation type="journal article" date="2004" name="Proc. Natl. Acad. Sci. U.S.A.">
        <title>The diploid genome sequence of Candida albicans.</title>
        <authorList>
            <person name="Jones T."/>
            <person name="Federspiel N.A."/>
            <person name="Chibana H."/>
            <person name="Dungan J."/>
            <person name="Kalman S."/>
            <person name="Magee B.B."/>
            <person name="Newport G."/>
            <person name="Thorstenson Y.R."/>
            <person name="Agabian N."/>
            <person name="Magee P.T."/>
            <person name="Davis R.W."/>
            <person name="Scherer S."/>
        </authorList>
    </citation>
    <scope>NUCLEOTIDE SEQUENCE [LARGE SCALE GENOMIC DNA]</scope>
    <source>
        <strain>SC5314 / ATCC MYA-2876</strain>
    </source>
</reference>
<reference key="2">
    <citation type="journal article" date="2007" name="Genome Biol.">
        <title>Assembly of the Candida albicans genome into sixteen supercontigs aligned on the eight chromosomes.</title>
        <authorList>
            <person name="van het Hoog M."/>
            <person name="Rast T.J."/>
            <person name="Martchenko M."/>
            <person name="Grindle S."/>
            <person name="Dignard D."/>
            <person name="Hogues H."/>
            <person name="Cuomo C."/>
            <person name="Berriman M."/>
            <person name="Scherer S."/>
            <person name="Magee B.B."/>
            <person name="Whiteway M."/>
            <person name="Chibana H."/>
            <person name="Nantel A."/>
            <person name="Magee P.T."/>
        </authorList>
    </citation>
    <scope>GENOME REANNOTATION</scope>
    <source>
        <strain>SC5314 / ATCC MYA-2876</strain>
    </source>
</reference>
<reference key="3">
    <citation type="journal article" date="2013" name="Genome Biol.">
        <title>Assembly of a phased diploid Candida albicans genome facilitates allele-specific measurements and provides a simple model for repeat and indel structure.</title>
        <authorList>
            <person name="Muzzey D."/>
            <person name="Schwartz K."/>
            <person name="Weissman J.S."/>
            <person name="Sherlock G."/>
        </authorList>
    </citation>
    <scope>NUCLEOTIDE SEQUENCE [LARGE SCALE GENOMIC DNA]</scope>
    <scope>GENOME REANNOTATION</scope>
    <source>
        <strain>SC5314 / ATCC MYA-2876</strain>
    </source>
</reference>
<reference evidence="5 6 7" key="4">
    <citation type="journal article" date="2022" name="Sci. Adv.">
        <title>E-site drug specificity of the human pathogen Candida albicans ribosome.</title>
        <authorList>
            <person name="Zgadzay Y."/>
            <person name="Kolosova O."/>
            <person name="Stetsenko A."/>
            <person name="Wu C."/>
            <person name="Bruchlen D."/>
            <person name="Usachev K."/>
            <person name="Validov S."/>
            <person name="Jenner L."/>
            <person name="Rogachev A."/>
            <person name="Yusupova G."/>
            <person name="Sachs M.S."/>
            <person name="Guskov A."/>
            <person name="Yusupov M."/>
        </authorList>
    </citation>
    <scope>STRUCTURE BY ELECTRON MICROSCOPY (2.32 ANGSTROMS) OF THE 80S RIBOSOME</scope>
    <scope>SUBUNIT</scope>
</reference>
<proteinExistence type="evidence at protein level"/>
<keyword id="KW-0002">3D-structure</keyword>
<keyword id="KW-0963">Cytoplasm</keyword>
<keyword id="KW-1185">Reference proteome</keyword>
<keyword id="KW-0687">Ribonucleoprotein</keyword>
<keyword id="KW-0689">Ribosomal protein</keyword>
<accession>Q5ADQ6</accession>
<name>RS12_CANAL</name>
<dbReference type="EMBL" id="CP017625">
    <property type="protein sequence ID" value="AOW28718.1"/>
    <property type="molecule type" value="Genomic_DNA"/>
</dbReference>
<dbReference type="RefSeq" id="XP_719881.1">
    <property type="nucleotide sequence ID" value="XM_714788.1"/>
</dbReference>
<dbReference type="PDB" id="7PZY">
    <property type="method" value="EM"/>
    <property type="resolution" value="2.32 A"/>
    <property type="chains" value="N=1-143"/>
</dbReference>
<dbReference type="PDB" id="7Q08">
    <property type="method" value="EM"/>
    <property type="resolution" value="2.56 A"/>
    <property type="chains" value="N=1-143"/>
</dbReference>
<dbReference type="PDB" id="7Q0F">
    <property type="method" value="EM"/>
    <property type="resolution" value="2.64 A"/>
    <property type="chains" value="N=1-143"/>
</dbReference>
<dbReference type="PDB" id="7Q0P">
    <property type="method" value="EM"/>
    <property type="resolution" value="2.77 A"/>
    <property type="chains" value="N=1-143"/>
</dbReference>
<dbReference type="PDB" id="7Q0R">
    <property type="method" value="EM"/>
    <property type="resolution" value="2.67 A"/>
    <property type="chains" value="N=1-143"/>
</dbReference>
<dbReference type="PDB" id="8C3A">
    <property type="method" value="X-ray"/>
    <property type="resolution" value="3.00 A"/>
    <property type="chains" value="CZ/O=1-143"/>
</dbReference>
<dbReference type="PDB" id="8OGJ">
    <property type="method" value="EM"/>
    <property type="resolution" value="3.10 A"/>
    <property type="chains" value="N=1-143"/>
</dbReference>
<dbReference type="PDB" id="8OH6">
    <property type="method" value="X-ray"/>
    <property type="resolution" value="3.35 A"/>
    <property type="chains" value="CZ/O=1-143"/>
</dbReference>
<dbReference type="PDB" id="8OI5">
    <property type="method" value="X-ray"/>
    <property type="resolution" value="2.90 A"/>
    <property type="chains" value="CZ/O=1-143"/>
</dbReference>
<dbReference type="PDB" id="8OJ3">
    <property type="method" value="X-ray"/>
    <property type="resolution" value="3.50 A"/>
    <property type="chains" value="CZ/O=1-143"/>
</dbReference>
<dbReference type="PDBsum" id="7PZY"/>
<dbReference type="PDBsum" id="7Q08"/>
<dbReference type="PDBsum" id="7Q0F"/>
<dbReference type="PDBsum" id="7Q0P"/>
<dbReference type="PDBsum" id="7Q0R"/>
<dbReference type="PDBsum" id="8C3A"/>
<dbReference type="PDBsum" id="8OGJ"/>
<dbReference type="PDBsum" id="8OH6"/>
<dbReference type="PDBsum" id="8OI5"/>
<dbReference type="PDBsum" id="8OJ3"/>
<dbReference type="EMDB" id="EMD-13737"/>
<dbReference type="EMDB" id="EMD-13741"/>
<dbReference type="EMDB" id="EMD-13744"/>
<dbReference type="EMDB" id="EMD-13749"/>
<dbReference type="EMDB" id="EMD-13750"/>
<dbReference type="SMR" id="Q5ADQ6"/>
<dbReference type="FunCoup" id="Q5ADQ6">
    <property type="interactions" value="1025"/>
</dbReference>
<dbReference type="STRING" id="237561.Q5ADQ6"/>
<dbReference type="EnsemblFungi" id="C3_07150C_A-T">
    <property type="protein sequence ID" value="C3_07150C_A-T-p1"/>
    <property type="gene ID" value="C3_07150C_A"/>
</dbReference>
<dbReference type="GeneID" id="3638438"/>
<dbReference type="KEGG" id="cal:CAALFM_C307150CA"/>
<dbReference type="CGD" id="CAL0000200890">
    <property type="gene designation" value="RPS12"/>
</dbReference>
<dbReference type="VEuPathDB" id="FungiDB:C3_07150C_A"/>
<dbReference type="eggNOG" id="KOG3406">
    <property type="taxonomic scope" value="Eukaryota"/>
</dbReference>
<dbReference type="HOGENOM" id="CLU_110343_1_0_1"/>
<dbReference type="InParanoid" id="Q5ADQ6"/>
<dbReference type="OMA" id="CAEHQIP"/>
<dbReference type="OrthoDB" id="10249311at2759"/>
<dbReference type="Proteomes" id="UP000000559">
    <property type="component" value="Chromosome 3"/>
</dbReference>
<dbReference type="GO" id="GO:0022627">
    <property type="term" value="C:cytosolic small ribosomal subunit"/>
    <property type="evidence" value="ECO:0000318"/>
    <property type="project" value="GO_Central"/>
</dbReference>
<dbReference type="GO" id="GO:0003735">
    <property type="term" value="F:structural constituent of ribosome"/>
    <property type="evidence" value="ECO:0000318"/>
    <property type="project" value="GO_Central"/>
</dbReference>
<dbReference type="GO" id="GO:1990145">
    <property type="term" value="P:maintenance of translational fidelity"/>
    <property type="evidence" value="ECO:0000318"/>
    <property type="project" value="GO_Central"/>
</dbReference>
<dbReference type="GO" id="GO:0030490">
    <property type="term" value="P:maturation of SSU-rRNA"/>
    <property type="evidence" value="ECO:0007669"/>
    <property type="project" value="EnsemblFungi"/>
</dbReference>
<dbReference type="GO" id="GO:0000028">
    <property type="term" value="P:ribosomal small subunit assembly"/>
    <property type="evidence" value="ECO:0007669"/>
    <property type="project" value="EnsemblFungi"/>
</dbReference>
<dbReference type="GO" id="GO:0042274">
    <property type="term" value="P:ribosomal small subunit biogenesis"/>
    <property type="evidence" value="ECO:0000318"/>
    <property type="project" value="GO_Central"/>
</dbReference>
<dbReference type="FunFam" id="3.30.1330.30:FF:000019">
    <property type="entry name" value="40S ribosomal protein S12"/>
    <property type="match status" value="1"/>
</dbReference>
<dbReference type="Gene3D" id="3.30.1330.30">
    <property type="match status" value="1"/>
</dbReference>
<dbReference type="InterPro" id="IPR029064">
    <property type="entry name" value="Ribosomal_eL30-like_sf"/>
</dbReference>
<dbReference type="InterPro" id="IPR004038">
    <property type="entry name" value="Ribosomal_eL8/eL30/eS12/Gad45"/>
</dbReference>
<dbReference type="InterPro" id="IPR000530">
    <property type="entry name" value="Ribosomal_eS12"/>
</dbReference>
<dbReference type="InterPro" id="IPR047860">
    <property type="entry name" value="Ribosomal_eS12_CS"/>
</dbReference>
<dbReference type="PANTHER" id="PTHR11843">
    <property type="entry name" value="40S RIBOSOMAL PROTEIN S12"/>
    <property type="match status" value="1"/>
</dbReference>
<dbReference type="Pfam" id="PF01248">
    <property type="entry name" value="Ribosomal_L7Ae"/>
    <property type="match status" value="1"/>
</dbReference>
<dbReference type="PRINTS" id="PR00972">
    <property type="entry name" value="RIBSOMALS12E"/>
</dbReference>
<dbReference type="SUPFAM" id="SSF55315">
    <property type="entry name" value="L30e-like"/>
    <property type="match status" value="1"/>
</dbReference>
<dbReference type="PROSITE" id="PS01189">
    <property type="entry name" value="RIBOSOMAL_S12E"/>
    <property type="match status" value="1"/>
</dbReference>
<feature type="chain" id="PRO_0000456550" description="Small ribosomal subunit protein eS12">
    <location>
        <begin position="1"/>
        <end position="143"/>
    </location>
</feature>
<comment type="function">
    <text evidence="4">Component of the ribosome, a large ribonucleoprotein complex responsible for the synthesis of proteins in the cell. The small ribosomal subunit (SSU) binds messenger RNAs (mRNAs) and translates the encoded message by selecting cognate aminoacyl-transfer RNA (tRNA) molecules. The large subunit (LSU) contains the ribosomal catalytic site termed the peptidyl transferase center (PTC), which catalyzes the formation of peptide bonds, thereby polymerizing the amino acids delivered by tRNAs into a polypeptide chain. The nascent polypeptides leave the ribosome through a tunnel in the LSU and interact with protein factors that function in enzymatic processing, targeting, and the membrane insertion of nascent chains at the exit of the ribosomal tunnel.</text>
</comment>
<comment type="subunit">
    <text evidence="1">Component of the small ribosomal subunit (PubMed:35613268). Mature ribosomes consist of a small (40S) and a large (60S) subunit (PubMed:35613268). The 40S subunit contains about 32 different proteins and 1 molecule of RNA (18S) (PubMed:35613268). The 60S subunit contains 45 different proteins and 3 molecules of RNA (25S, 5.8S and 5S) (PubMed:35613268).</text>
</comment>
<comment type="subcellular location">
    <subcellularLocation>
        <location evidence="4">Cytoplasm</location>
    </subcellularLocation>
</comment>
<comment type="similarity">
    <text evidence="3">Belongs to the eukaryotic ribosomal protein eS12 family.</text>
</comment>
<protein>
    <recommendedName>
        <fullName evidence="2">Small ribosomal subunit protein eS12</fullName>
    </recommendedName>
    <alternativeName>
        <fullName>40S ribosomal protein S12</fullName>
    </alternativeName>
</protein>
<gene>
    <name type="primary">RPS12</name>
    <name type="ordered locus">orf19.6785</name>
    <name type="ORF">CAALFM_C307150CA</name>
</gene>
<evidence type="ECO:0000269" key="1">
    <source>
    </source>
</evidence>
<evidence type="ECO:0000303" key="2">
    <source>
    </source>
</evidence>
<evidence type="ECO:0000305" key="3"/>
<evidence type="ECO:0000305" key="4">
    <source>
    </source>
</evidence>
<evidence type="ECO:0007744" key="5">
    <source>
        <dbReference type="PDB" id="7PZY"/>
    </source>
</evidence>
<evidence type="ECO:0007744" key="6">
    <source>
        <dbReference type="PDB" id="7Q0F"/>
    </source>
</evidence>
<evidence type="ECO:0007744" key="7">
    <source>
        <dbReference type="PDB" id="7Q0P"/>
    </source>
</evidence>
<organism>
    <name type="scientific">Candida albicans (strain SC5314 / ATCC MYA-2876)</name>
    <name type="common">Yeast</name>
    <dbReference type="NCBI Taxonomy" id="237561"/>
    <lineage>
        <taxon>Eukaryota</taxon>
        <taxon>Fungi</taxon>
        <taxon>Dikarya</taxon>
        <taxon>Ascomycota</taxon>
        <taxon>Saccharomycotina</taxon>
        <taxon>Pichiomycetes</taxon>
        <taxon>Debaryomycetaceae</taxon>
        <taxon>Candida/Lodderomyces clade</taxon>
        <taxon>Candida</taxon>
    </lineage>
</organism>
<sequence>MSDVEQEQIVEEVVVEEQSGAITIEDALKVVLRTSLVHDGLARGLREASKALSKREAQLCVLCDSVTEESIIKLVEALCNEPEEKIPLIKVSDAKLLGEWAGLCQLDRDGNARKVVGASCVVVKNWGADSDERNILLEHFSQQ</sequence>